<protein>
    <recommendedName>
        <fullName evidence="1">Leucine--tRNA ligase</fullName>
        <ecNumber evidence="1">6.1.1.4</ecNumber>
    </recommendedName>
    <alternativeName>
        <fullName evidence="1">Leucyl-tRNA synthetase</fullName>
        <shortName evidence="1">LeuRS</shortName>
    </alternativeName>
</protein>
<proteinExistence type="inferred from homology"/>
<dbReference type="EC" id="6.1.1.4" evidence="1"/>
<dbReference type="EMBL" id="AB090309">
    <property type="protein sequence ID" value="BAC10608.1"/>
    <property type="molecule type" value="Genomic_DNA"/>
</dbReference>
<dbReference type="EMBL" id="AP006878">
    <property type="protein sequence ID" value="BAD85650.1"/>
    <property type="molecule type" value="Genomic_DNA"/>
</dbReference>
<dbReference type="RefSeq" id="WP_011250412.1">
    <property type="nucleotide sequence ID" value="NC_006624.1"/>
</dbReference>
<dbReference type="SMR" id="Q8NKR7"/>
<dbReference type="FunCoup" id="Q8NKR7">
    <property type="interactions" value="192"/>
</dbReference>
<dbReference type="IntAct" id="Q8NKR7">
    <property type="interactions" value="119"/>
</dbReference>
<dbReference type="MINT" id="Q8NKR7"/>
<dbReference type="STRING" id="69014.TK1461"/>
<dbReference type="EnsemblBacteria" id="BAD85650">
    <property type="protein sequence ID" value="BAD85650"/>
    <property type="gene ID" value="TK1461"/>
</dbReference>
<dbReference type="GeneID" id="78447983"/>
<dbReference type="KEGG" id="tko:TK1461"/>
<dbReference type="PATRIC" id="fig|69014.16.peg.1423"/>
<dbReference type="eggNOG" id="arCOG00809">
    <property type="taxonomic scope" value="Archaea"/>
</dbReference>
<dbReference type="HOGENOM" id="CLU_004174_0_0_2"/>
<dbReference type="InParanoid" id="Q8NKR7"/>
<dbReference type="OrthoDB" id="23906at2157"/>
<dbReference type="PhylomeDB" id="Q8NKR7"/>
<dbReference type="Proteomes" id="UP000000536">
    <property type="component" value="Chromosome"/>
</dbReference>
<dbReference type="GO" id="GO:0005737">
    <property type="term" value="C:cytoplasm"/>
    <property type="evidence" value="ECO:0007669"/>
    <property type="project" value="UniProtKB-SubCell"/>
</dbReference>
<dbReference type="GO" id="GO:0002161">
    <property type="term" value="F:aminoacyl-tRNA deacylase activity"/>
    <property type="evidence" value="ECO:0007669"/>
    <property type="project" value="InterPro"/>
</dbReference>
<dbReference type="GO" id="GO:0005524">
    <property type="term" value="F:ATP binding"/>
    <property type="evidence" value="ECO:0007669"/>
    <property type="project" value="UniProtKB-UniRule"/>
</dbReference>
<dbReference type="GO" id="GO:0004823">
    <property type="term" value="F:leucine-tRNA ligase activity"/>
    <property type="evidence" value="ECO:0000318"/>
    <property type="project" value="GO_Central"/>
</dbReference>
<dbReference type="GO" id="GO:0006429">
    <property type="term" value="P:leucyl-tRNA aminoacylation"/>
    <property type="evidence" value="ECO:0000318"/>
    <property type="project" value="GO_Central"/>
</dbReference>
<dbReference type="CDD" id="cd07959">
    <property type="entry name" value="Anticodon_Ia_Leu_AEc"/>
    <property type="match status" value="1"/>
</dbReference>
<dbReference type="CDD" id="cd00812">
    <property type="entry name" value="LeuRS_core"/>
    <property type="match status" value="1"/>
</dbReference>
<dbReference type="FunFam" id="1.10.730.10:FF:000051">
    <property type="entry name" value="Leucine--tRNA ligase"/>
    <property type="match status" value="1"/>
</dbReference>
<dbReference type="FunFam" id="3.90.740.10:FF:000024">
    <property type="entry name" value="Leucine--tRNA ligase"/>
    <property type="match status" value="1"/>
</dbReference>
<dbReference type="Gene3D" id="3.30.2320.20">
    <property type="entry name" value="Class I aminoacyl-tRNA synthetases (RS)"/>
    <property type="match status" value="1"/>
</dbReference>
<dbReference type="Gene3D" id="3.40.50.620">
    <property type="entry name" value="HUPs"/>
    <property type="match status" value="1"/>
</dbReference>
<dbReference type="Gene3D" id="1.10.730.10">
    <property type="entry name" value="Isoleucyl-tRNA Synthetase, Domain 1"/>
    <property type="match status" value="1"/>
</dbReference>
<dbReference type="Gene3D" id="1.10.10.720">
    <property type="entry name" value="leucyl-tRNA synthetase"/>
    <property type="match status" value="1"/>
</dbReference>
<dbReference type="Gene3D" id="3.90.740.10">
    <property type="entry name" value="Valyl/Leucyl/Isoleucyl-tRNA synthetase, editing domain"/>
    <property type="match status" value="1"/>
</dbReference>
<dbReference type="HAMAP" id="MF_00049_A">
    <property type="entry name" value="Leu_tRNA_synth_A"/>
    <property type="match status" value="1"/>
</dbReference>
<dbReference type="InterPro" id="IPR001412">
    <property type="entry name" value="aa-tRNA-synth_I_CS"/>
</dbReference>
<dbReference type="InterPro" id="IPR002300">
    <property type="entry name" value="aa-tRNA-synth_Ia"/>
</dbReference>
<dbReference type="InterPro" id="IPR020791">
    <property type="entry name" value="Leu-tRNA-lgase_arc"/>
</dbReference>
<dbReference type="InterPro" id="IPR004493">
    <property type="entry name" value="Leu-tRNA-synth_Ia_arc/euk"/>
</dbReference>
<dbReference type="InterPro" id="IPR013155">
    <property type="entry name" value="M/V/L/I-tRNA-synth_anticd-bd"/>
</dbReference>
<dbReference type="InterPro" id="IPR014729">
    <property type="entry name" value="Rossmann-like_a/b/a_fold"/>
</dbReference>
<dbReference type="InterPro" id="IPR009080">
    <property type="entry name" value="tRNAsynth_Ia_anticodon-bd"/>
</dbReference>
<dbReference type="InterPro" id="IPR009008">
    <property type="entry name" value="Val/Leu/Ile-tRNA-synth_edit"/>
</dbReference>
<dbReference type="NCBIfam" id="TIGR00395">
    <property type="entry name" value="leuS_arch"/>
    <property type="match status" value="1"/>
</dbReference>
<dbReference type="NCBIfam" id="NF008957">
    <property type="entry name" value="PRK12300.1"/>
    <property type="match status" value="1"/>
</dbReference>
<dbReference type="PANTHER" id="PTHR45794:SF1">
    <property type="entry name" value="LEUCINE--TRNA LIGASE, CYTOPLASMIC"/>
    <property type="match status" value="1"/>
</dbReference>
<dbReference type="PANTHER" id="PTHR45794">
    <property type="entry name" value="LEUCYL-TRNA SYNTHETASE"/>
    <property type="match status" value="1"/>
</dbReference>
<dbReference type="Pfam" id="PF08264">
    <property type="entry name" value="Anticodon_1"/>
    <property type="match status" value="1"/>
</dbReference>
<dbReference type="Pfam" id="PF00133">
    <property type="entry name" value="tRNA-synt_1"/>
    <property type="match status" value="1"/>
</dbReference>
<dbReference type="SUPFAM" id="SSF47323">
    <property type="entry name" value="Anticodon-binding domain of a subclass of class I aminoacyl-tRNA synthetases"/>
    <property type="match status" value="1"/>
</dbReference>
<dbReference type="SUPFAM" id="SSF52374">
    <property type="entry name" value="Nucleotidylyl transferase"/>
    <property type="match status" value="1"/>
</dbReference>
<dbReference type="SUPFAM" id="SSF50677">
    <property type="entry name" value="ValRS/IleRS/LeuRS editing domain"/>
    <property type="match status" value="1"/>
</dbReference>
<dbReference type="PROSITE" id="PS00178">
    <property type="entry name" value="AA_TRNA_LIGASE_I"/>
    <property type="match status" value="1"/>
</dbReference>
<name>SYL_THEKO</name>
<reference key="1">
    <citation type="submission" date="2002-08" db="EMBL/GenBank/DDBJ databases">
        <title>Thermococcus kodakaraensis KOD1 LeuRS gene for leucyl-tRNA synthetase.</title>
        <authorList>
            <person name="Sawaki T."/>
            <person name="Amano H."/>
            <person name="Shiraki K."/>
            <person name="Fukuzawa K."/>
            <person name="Fujiwara S."/>
            <person name="Sekiguchi T."/>
            <person name="Takagi M."/>
        </authorList>
    </citation>
    <scope>NUCLEOTIDE SEQUENCE [GENOMIC DNA]</scope>
    <source>
        <strain>ATCC BAA-918 / JCM 12380 / KOD1</strain>
    </source>
</reference>
<reference key="2">
    <citation type="journal article" date="2005" name="Genome Res.">
        <title>Complete genome sequence of the hyperthermophilic archaeon Thermococcus kodakaraensis KOD1 and comparison with Pyrococcus genomes.</title>
        <authorList>
            <person name="Fukui T."/>
            <person name="Atomi H."/>
            <person name="Kanai T."/>
            <person name="Matsumi R."/>
            <person name="Fujiwara S."/>
            <person name="Imanaka T."/>
        </authorList>
    </citation>
    <scope>NUCLEOTIDE SEQUENCE [LARGE SCALE GENOMIC DNA]</scope>
    <source>
        <strain>ATCC BAA-918 / JCM 12380 / KOD1</strain>
    </source>
</reference>
<keyword id="KW-0030">Aminoacyl-tRNA synthetase</keyword>
<keyword id="KW-0067">ATP-binding</keyword>
<keyword id="KW-0963">Cytoplasm</keyword>
<keyword id="KW-0436">Ligase</keyword>
<keyword id="KW-0547">Nucleotide-binding</keyword>
<keyword id="KW-0648">Protein biosynthesis</keyword>
<keyword id="KW-1185">Reference proteome</keyword>
<sequence>MAELNFKAIEEKWQKRWMEARVFEPDRKAKPKEKKFYITVAFPYLSGHLHVGHARTYTIPDVIARFKRMQGYNVLFPMGWHITGAPIVGIAERIKNRDPKTIHIYRDVYKVPEEILWKFEDPKEIVKYFMKAAKETFIRAGFSVDWTREFHTTSLFPPFSKFIEWQFWTLKDMGLVVKGAHRVRWDPVVGTPLGDHDIMEGEDVQILEYVIIKFILEENGETIYLPAATLRPETVYGVTNMWLNPEATYVKAKVRKGDREELWIVSKEAAYKLSFQDREIEVIEEFKGEKLIGKYVKNPVTGDEVIILPAEFVDPDNATGVVMSVPAHAPFDHIALEDLKKETEILLKYDIDPRVVEEISYISLISLEGYGEFPAVEEAERLGVKSQKDKEKLEQATKNIYKAEYHKGIFKIEPYAGKPVQEVKELVAKEMMEKGIAEIMYEFADKPVISRFGNQAVIKIIHDQWFIDYGNPEWKAKAREALANMTIYPESRRAQFEAVIDWLDKKACARKVGLGTPLPWDPDWVIESLSDSTIYMAYYTISRHINQLRKEGKLDAEKLDREFFDYIFREPFSEEKERKLSEKTGIPAETIHEMKEEFEYWYPLDWRCSAKDLIPNHLTFFIFNHVAIFDKKHWPKGIAVNGFGTLEGQKMSKSKGNVLNFIDAIEENGADVVRLYIMGLAEHDSDFDWRRKEVGKLRKQVERFYELVSEFATYEAKEGVELKDIDRWMLHRLNKAIEGATKALEEFRTRTAVQWAFYTVLNDLRWYLRRTEGRDDDAKRYVLRTLADVWVRLMAPFTPHISEELWEKLGGEGFVSLAPWPEPVPEWWNETVEAEEDFVKSLIEDIKEIITVAKIENPKRAYIYTAPEWKWRVVEVVAEKRDFKAAMAELMKDPEMRKHGKEVSKLIQRLIKERAFEVKRIDEEKALREAKDFIEKELGIEIIINPEEDRGGKKKQAMPLKPAVFVE</sequence>
<feature type="chain" id="PRO_0000152141" description="Leucine--tRNA ligase">
    <location>
        <begin position="1"/>
        <end position="967"/>
    </location>
</feature>
<feature type="short sequence motif" description="'HIGH' region">
    <location>
        <begin position="43"/>
        <end position="53"/>
    </location>
</feature>
<feature type="short sequence motif" description="'KMSKS' region">
    <location>
        <begin position="650"/>
        <end position="654"/>
    </location>
</feature>
<feature type="binding site" evidence="1">
    <location>
        <position position="653"/>
    </location>
    <ligand>
        <name>ATP</name>
        <dbReference type="ChEBI" id="CHEBI:30616"/>
    </ligand>
</feature>
<feature type="sequence conflict" description="In Ref. 1; BAC10608." evidence="2" ref="1">
    <original>V</original>
    <variation>C</variation>
    <location>
        <position position="321"/>
    </location>
</feature>
<feature type="sequence conflict" description="In Ref. 1; BAC10608." evidence="2" ref="1">
    <original>T</original>
    <variation>A</variation>
    <location>
        <position position="590"/>
    </location>
</feature>
<feature type="sequence conflict" description="In Ref. 1." evidence="2" ref="1">
    <original>SK</original>
    <variation>RQ</variation>
    <location>
        <begin position="654"/>
        <end position="655"/>
    </location>
</feature>
<feature type="sequence conflict" description="In Ref. 1." evidence="2" ref="1">
    <original>N</original>
    <variation>Q</variation>
    <location>
        <position position="657"/>
    </location>
</feature>
<feature type="sequence conflict" description="In Ref. 1." evidence="2" ref="1">
    <original>L</original>
    <variation>Q</variation>
    <location>
        <position position="659"/>
    </location>
</feature>
<feature type="sequence conflict" description="In Ref. 1; BAC10608." evidence="2" ref="1">
    <original>D</original>
    <variation>Y</variation>
    <location>
        <position position="663"/>
    </location>
</feature>
<feature type="sequence conflict" description="In Ref. 1; BAC10608." evidence="2" ref="1">
    <original>E</original>
    <variation>D</variation>
    <location>
        <position position="822"/>
    </location>
</feature>
<gene>
    <name evidence="1" type="primary">leuS</name>
    <name type="ordered locus">TK1461</name>
</gene>
<comment type="catalytic activity">
    <reaction evidence="1">
        <text>tRNA(Leu) + L-leucine + ATP = L-leucyl-tRNA(Leu) + AMP + diphosphate</text>
        <dbReference type="Rhea" id="RHEA:11688"/>
        <dbReference type="Rhea" id="RHEA-COMP:9613"/>
        <dbReference type="Rhea" id="RHEA-COMP:9622"/>
        <dbReference type="ChEBI" id="CHEBI:30616"/>
        <dbReference type="ChEBI" id="CHEBI:33019"/>
        <dbReference type="ChEBI" id="CHEBI:57427"/>
        <dbReference type="ChEBI" id="CHEBI:78442"/>
        <dbReference type="ChEBI" id="CHEBI:78494"/>
        <dbReference type="ChEBI" id="CHEBI:456215"/>
        <dbReference type="EC" id="6.1.1.4"/>
    </reaction>
</comment>
<comment type="subcellular location">
    <subcellularLocation>
        <location evidence="1">Cytoplasm</location>
    </subcellularLocation>
</comment>
<comment type="similarity">
    <text evidence="1">Belongs to the class-I aminoacyl-tRNA synthetase family.</text>
</comment>
<accession>Q8NKR7</accession>
<accession>Q5JH65</accession>
<organism>
    <name type="scientific">Thermococcus kodakarensis (strain ATCC BAA-918 / JCM 12380 / KOD1)</name>
    <name type="common">Pyrococcus kodakaraensis (strain KOD1)</name>
    <dbReference type="NCBI Taxonomy" id="69014"/>
    <lineage>
        <taxon>Archaea</taxon>
        <taxon>Methanobacteriati</taxon>
        <taxon>Methanobacteriota</taxon>
        <taxon>Thermococci</taxon>
        <taxon>Thermococcales</taxon>
        <taxon>Thermococcaceae</taxon>
        <taxon>Thermococcus</taxon>
    </lineage>
</organism>
<evidence type="ECO:0000255" key="1">
    <source>
        <dbReference type="HAMAP-Rule" id="MF_00049"/>
    </source>
</evidence>
<evidence type="ECO:0000305" key="2"/>